<reference key="1">
    <citation type="journal article" date="2007" name="Nature">
        <title>Evolution of genes and genomes on the Drosophila phylogeny.</title>
        <authorList>
            <consortium name="Drosophila 12 genomes consortium"/>
        </authorList>
    </citation>
    <scope>NUCLEOTIDE SEQUENCE [LARGE SCALE GENOMIC DNA]</scope>
    <source>
        <strain>Tai18E2 / Tucson 14021-0261.01</strain>
    </source>
</reference>
<dbReference type="EMBL" id="CM000160">
    <property type="protein sequence ID" value="EDW96233.1"/>
    <property type="molecule type" value="Genomic_DNA"/>
</dbReference>
<dbReference type="SMR" id="B4PQC4"/>
<dbReference type="EnsemblMetazoa" id="FBtr0272234">
    <property type="protein sequence ID" value="FBpp0270726"/>
    <property type="gene ID" value="FBgn0242774"/>
</dbReference>
<dbReference type="EnsemblMetazoa" id="XM_002096485.4">
    <property type="protein sequence ID" value="XP_002096521.1"/>
    <property type="gene ID" value="LOC6535905"/>
</dbReference>
<dbReference type="GeneID" id="6535905"/>
<dbReference type="KEGG" id="dya:Dyak_GE25716"/>
<dbReference type="CTD" id="65992"/>
<dbReference type="eggNOG" id="KOG3054">
    <property type="taxonomic scope" value="Eukaryota"/>
</dbReference>
<dbReference type="HOGENOM" id="CLU_059562_1_0_1"/>
<dbReference type="OMA" id="VEHGNKV"/>
<dbReference type="OrthoDB" id="2285710at2759"/>
<dbReference type="PhylomeDB" id="B4PQC4"/>
<dbReference type="Proteomes" id="UP000002282">
    <property type="component" value="Chromosome 3R"/>
</dbReference>
<dbReference type="GO" id="GO:0005789">
    <property type="term" value="C:endoplasmic reticulum membrane"/>
    <property type="evidence" value="ECO:0007669"/>
    <property type="project" value="UniProtKB-SubCell"/>
</dbReference>
<dbReference type="GO" id="GO:0044389">
    <property type="term" value="F:ubiquitin-like protein ligase binding"/>
    <property type="evidence" value="ECO:0007669"/>
    <property type="project" value="TreeGrafter"/>
</dbReference>
<dbReference type="GO" id="GO:0071569">
    <property type="term" value="P:protein ufmylation"/>
    <property type="evidence" value="ECO:0007669"/>
    <property type="project" value="EnsemblMetazoa"/>
</dbReference>
<dbReference type="FunFam" id="1.10.10.10:FF:000143">
    <property type="entry name" value="DDRGK domain-containing protein 1"/>
    <property type="match status" value="1"/>
</dbReference>
<dbReference type="Gene3D" id="1.10.10.10">
    <property type="entry name" value="Winged helix-like DNA-binding domain superfamily/Winged helix DNA-binding domain"/>
    <property type="match status" value="1"/>
</dbReference>
<dbReference type="InterPro" id="IPR019153">
    <property type="entry name" value="DDRGK_dom-contain"/>
</dbReference>
<dbReference type="InterPro" id="IPR050899">
    <property type="entry name" value="DDRGK_domain-containing"/>
</dbReference>
<dbReference type="InterPro" id="IPR036388">
    <property type="entry name" value="WH-like_DNA-bd_sf"/>
</dbReference>
<dbReference type="InterPro" id="IPR036390">
    <property type="entry name" value="WH_DNA-bd_sf"/>
</dbReference>
<dbReference type="PANTHER" id="PTHR48176">
    <property type="entry name" value="DDRGK DOMAIN-CONTAINING PROTEIN 1"/>
    <property type="match status" value="1"/>
</dbReference>
<dbReference type="PANTHER" id="PTHR48176:SF1">
    <property type="entry name" value="DDRGK DOMAIN-CONTAINING PROTEIN 1"/>
    <property type="match status" value="1"/>
</dbReference>
<dbReference type="Pfam" id="PF09756">
    <property type="entry name" value="DDRGK"/>
    <property type="match status" value="1"/>
</dbReference>
<dbReference type="SMART" id="SM01128">
    <property type="entry name" value="DDRGK"/>
    <property type="match status" value="1"/>
</dbReference>
<dbReference type="SUPFAM" id="SSF46785">
    <property type="entry name" value="Winged helix' DNA-binding domain"/>
    <property type="match status" value="1"/>
</dbReference>
<gene>
    <name evidence="2" type="primary">Ddrgk1</name>
    <name type="ORF">GE25716</name>
</gene>
<comment type="function">
    <text evidence="1 2">Substrate adapter for ufmylation, the covalent attachment of the ubiquitin-like modifier UFM1 to substrate proteins (By similarity). Required for ufmylation of Atg9; protects the nervous system during aging, possibly by stabilizing Atg9 and supporting its function (By similarity).</text>
</comment>
<comment type="subunit">
    <text evidence="2">Interacts with Atg9; the interaction is transient.</text>
</comment>
<comment type="subcellular location">
    <subcellularLocation>
        <location evidence="1">Endoplasmic reticulum membrane</location>
        <topology evidence="3">Single-pass membrane protein</topology>
    </subcellularLocation>
</comment>
<comment type="similarity">
    <text evidence="5">Belongs to the DDRGK1 family.</text>
</comment>
<keyword id="KW-0256">Endoplasmic reticulum</keyword>
<keyword id="KW-0472">Membrane</keyword>
<keyword id="KW-0812">Transmembrane</keyword>
<keyword id="KW-1133">Transmembrane helix</keyword>
<keyword id="KW-0833">Ubl conjugation pathway</keyword>
<accession>B4PQC4</accession>
<name>DDRGK_DROYA</name>
<feature type="chain" id="PRO_0000391867" description="DDRGK domain-containing protein 1">
    <location>
        <begin position="1"/>
        <end position="312"/>
    </location>
</feature>
<feature type="topological domain" description="Lumenal" evidence="5">
    <location>
        <begin position="1"/>
        <end position="2"/>
    </location>
</feature>
<feature type="transmembrane region" description="Helical" evidence="3">
    <location>
        <begin position="3"/>
        <end position="23"/>
    </location>
</feature>
<feature type="topological domain" description="Cytoplasmic" evidence="5">
    <location>
        <begin position="24"/>
        <end position="312"/>
    </location>
</feature>
<feature type="region of interest" description="Disordered" evidence="4">
    <location>
        <begin position="59"/>
        <end position="162"/>
    </location>
</feature>
<feature type="compositionally biased region" description="Low complexity" evidence="4">
    <location>
        <begin position="59"/>
        <end position="79"/>
    </location>
</feature>
<feature type="compositionally biased region" description="Basic and acidic residues" evidence="4">
    <location>
        <begin position="110"/>
        <end position="162"/>
    </location>
</feature>
<evidence type="ECO:0000250" key="1">
    <source>
        <dbReference type="UniProtKB" id="Q96HY6"/>
    </source>
</evidence>
<evidence type="ECO:0000250" key="2">
    <source>
        <dbReference type="UniProtKB" id="Q9VDD1"/>
    </source>
</evidence>
<evidence type="ECO:0000255" key="3"/>
<evidence type="ECO:0000256" key="4">
    <source>
        <dbReference type="SAM" id="MobiDB-lite"/>
    </source>
</evidence>
<evidence type="ECO:0000305" key="5"/>
<protein>
    <recommendedName>
        <fullName>DDRGK domain-containing protein 1</fullName>
    </recommendedName>
</protein>
<organism>
    <name type="scientific">Drosophila yakuba</name>
    <name type="common">Fruit fly</name>
    <dbReference type="NCBI Taxonomy" id="7245"/>
    <lineage>
        <taxon>Eukaryota</taxon>
        <taxon>Metazoa</taxon>
        <taxon>Ecdysozoa</taxon>
        <taxon>Arthropoda</taxon>
        <taxon>Hexapoda</taxon>
        <taxon>Insecta</taxon>
        <taxon>Pterygota</taxon>
        <taxon>Neoptera</taxon>
        <taxon>Endopterygota</taxon>
        <taxon>Diptera</taxon>
        <taxon>Brachycera</taxon>
        <taxon>Muscomorpha</taxon>
        <taxon>Ephydroidea</taxon>
        <taxon>Drosophilidae</taxon>
        <taxon>Drosophila</taxon>
        <taxon>Sophophora</taxon>
    </lineage>
</organism>
<proteinExistence type="inferred from homology"/>
<sequence>MELIILVGIATALLVVIITLYLLQKKNAAPETKPAAALQRGVPQRVQEGVPRRAQIARNQRNRLRQNAPAAPAGQVAPAAGPPAAPGDSDHENEGQVDDDDARVPQGAVLDEKMGAKKRAKMEAKEQKRLQREQELHDREQRKVKEAKEEAERKHQEDLEAEVERKRVEAERLAKEERERKEHEEYLKMKAAFSVEEEGFEEGDADEQDSLLADFIQYIRDNKVVVLEDLAVAFKLKTQQVIDRIQELQADGTLTGVIDDRGKFIYVSEEELSAVAKFIKQRGRVSIAELAESSNNLINLTPISAGGEEASS</sequence>